<gene>
    <name evidence="1" type="primary">rplT</name>
    <name type="ordered locus">BPUM_2530</name>
</gene>
<accession>A8FG25</accession>
<evidence type="ECO:0000255" key="1">
    <source>
        <dbReference type="HAMAP-Rule" id="MF_00382"/>
    </source>
</evidence>
<evidence type="ECO:0000305" key="2"/>
<reference key="1">
    <citation type="journal article" date="2007" name="PLoS ONE">
        <title>Paradoxical DNA repair and peroxide resistance gene conservation in Bacillus pumilus SAFR-032.</title>
        <authorList>
            <person name="Gioia J."/>
            <person name="Yerrapragada S."/>
            <person name="Qin X."/>
            <person name="Jiang H."/>
            <person name="Igboeli O.C."/>
            <person name="Muzny D."/>
            <person name="Dugan-Rocha S."/>
            <person name="Ding Y."/>
            <person name="Hawes A."/>
            <person name="Liu W."/>
            <person name="Perez L."/>
            <person name="Kovar C."/>
            <person name="Dinh H."/>
            <person name="Lee S."/>
            <person name="Nazareth L."/>
            <person name="Blyth P."/>
            <person name="Holder M."/>
            <person name="Buhay C."/>
            <person name="Tirumalai M.R."/>
            <person name="Liu Y."/>
            <person name="Dasgupta I."/>
            <person name="Bokhetache L."/>
            <person name="Fujita M."/>
            <person name="Karouia F."/>
            <person name="Eswara Moorthy P."/>
            <person name="Siefert J."/>
            <person name="Uzman A."/>
            <person name="Buzumbo P."/>
            <person name="Verma A."/>
            <person name="Zwiya H."/>
            <person name="McWilliams B.D."/>
            <person name="Olowu A."/>
            <person name="Clinkenbeard K.D."/>
            <person name="Newcombe D."/>
            <person name="Golebiewski L."/>
            <person name="Petrosino J.F."/>
            <person name="Nicholson W.L."/>
            <person name="Fox G.E."/>
            <person name="Venkateswaran K."/>
            <person name="Highlander S.K."/>
            <person name="Weinstock G.M."/>
        </authorList>
    </citation>
    <scope>NUCLEOTIDE SEQUENCE [LARGE SCALE GENOMIC DNA]</scope>
    <source>
        <strain>SAFR-032</strain>
    </source>
</reference>
<protein>
    <recommendedName>
        <fullName evidence="1">Large ribosomal subunit protein bL20</fullName>
    </recommendedName>
    <alternativeName>
        <fullName evidence="2">50S ribosomal protein L20</fullName>
    </alternativeName>
</protein>
<comment type="function">
    <text evidence="1">Binds directly to 23S ribosomal RNA and is necessary for the in vitro assembly process of the 50S ribosomal subunit. It is not involved in the protein synthesizing functions of that subunit.</text>
</comment>
<comment type="similarity">
    <text evidence="1">Belongs to the bacterial ribosomal protein bL20 family.</text>
</comment>
<keyword id="KW-0687">Ribonucleoprotein</keyword>
<keyword id="KW-0689">Ribosomal protein</keyword>
<keyword id="KW-0694">RNA-binding</keyword>
<keyword id="KW-0699">rRNA-binding</keyword>
<proteinExistence type="inferred from homology"/>
<sequence length="119" mass="13666">MPRVKGGTVSRQRRKKVLKLAKGYFGSKHRLYKVANQQVMKSGNYAFRDRRQKKRDFRKLWITRINAAARMNGLSYSRLMHGLKLSGIEVNRKMLADLAVNDLSAFNQLADAAKAQLDK</sequence>
<dbReference type="EMBL" id="CP000813">
    <property type="protein sequence ID" value="ABV63192.1"/>
    <property type="molecule type" value="Genomic_DNA"/>
</dbReference>
<dbReference type="RefSeq" id="WP_003216409.1">
    <property type="nucleotide sequence ID" value="NZ_VEIS01000006.1"/>
</dbReference>
<dbReference type="SMR" id="A8FG25"/>
<dbReference type="STRING" id="315750.BPUM_2530"/>
<dbReference type="GeneID" id="5621794"/>
<dbReference type="KEGG" id="bpu:BPUM_2530"/>
<dbReference type="eggNOG" id="COG0292">
    <property type="taxonomic scope" value="Bacteria"/>
</dbReference>
<dbReference type="HOGENOM" id="CLU_123265_0_1_9"/>
<dbReference type="OrthoDB" id="9808966at2"/>
<dbReference type="Proteomes" id="UP000001355">
    <property type="component" value="Chromosome"/>
</dbReference>
<dbReference type="GO" id="GO:1990904">
    <property type="term" value="C:ribonucleoprotein complex"/>
    <property type="evidence" value="ECO:0007669"/>
    <property type="project" value="UniProtKB-KW"/>
</dbReference>
<dbReference type="GO" id="GO:0005840">
    <property type="term" value="C:ribosome"/>
    <property type="evidence" value="ECO:0007669"/>
    <property type="project" value="UniProtKB-KW"/>
</dbReference>
<dbReference type="GO" id="GO:0019843">
    <property type="term" value="F:rRNA binding"/>
    <property type="evidence" value="ECO:0007669"/>
    <property type="project" value="UniProtKB-UniRule"/>
</dbReference>
<dbReference type="GO" id="GO:0003735">
    <property type="term" value="F:structural constituent of ribosome"/>
    <property type="evidence" value="ECO:0007669"/>
    <property type="project" value="InterPro"/>
</dbReference>
<dbReference type="GO" id="GO:0000027">
    <property type="term" value="P:ribosomal large subunit assembly"/>
    <property type="evidence" value="ECO:0007669"/>
    <property type="project" value="UniProtKB-UniRule"/>
</dbReference>
<dbReference type="GO" id="GO:0006412">
    <property type="term" value="P:translation"/>
    <property type="evidence" value="ECO:0007669"/>
    <property type="project" value="InterPro"/>
</dbReference>
<dbReference type="CDD" id="cd07026">
    <property type="entry name" value="Ribosomal_L20"/>
    <property type="match status" value="1"/>
</dbReference>
<dbReference type="FunFam" id="1.10.1900.20:FF:000001">
    <property type="entry name" value="50S ribosomal protein L20"/>
    <property type="match status" value="1"/>
</dbReference>
<dbReference type="Gene3D" id="6.10.160.10">
    <property type="match status" value="1"/>
</dbReference>
<dbReference type="Gene3D" id="1.10.1900.20">
    <property type="entry name" value="Ribosomal protein L20"/>
    <property type="match status" value="1"/>
</dbReference>
<dbReference type="HAMAP" id="MF_00382">
    <property type="entry name" value="Ribosomal_bL20"/>
    <property type="match status" value="1"/>
</dbReference>
<dbReference type="InterPro" id="IPR005813">
    <property type="entry name" value="Ribosomal_bL20"/>
</dbReference>
<dbReference type="InterPro" id="IPR049946">
    <property type="entry name" value="RIBOSOMAL_L20_CS"/>
</dbReference>
<dbReference type="InterPro" id="IPR035566">
    <property type="entry name" value="Ribosomal_protein_bL20_C"/>
</dbReference>
<dbReference type="NCBIfam" id="TIGR01032">
    <property type="entry name" value="rplT_bact"/>
    <property type="match status" value="1"/>
</dbReference>
<dbReference type="PANTHER" id="PTHR10986">
    <property type="entry name" value="39S RIBOSOMAL PROTEIN L20"/>
    <property type="match status" value="1"/>
</dbReference>
<dbReference type="Pfam" id="PF00453">
    <property type="entry name" value="Ribosomal_L20"/>
    <property type="match status" value="1"/>
</dbReference>
<dbReference type="PRINTS" id="PR00062">
    <property type="entry name" value="RIBOSOMALL20"/>
</dbReference>
<dbReference type="SUPFAM" id="SSF74731">
    <property type="entry name" value="Ribosomal protein L20"/>
    <property type="match status" value="1"/>
</dbReference>
<dbReference type="PROSITE" id="PS00937">
    <property type="entry name" value="RIBOSOMAL_L20"/>
    <property type="match status" value="1"/>
</dbReference>
<organism>
    <name type="scientific">Bacillus pumilus (strain SAFR-032)</name>
    <dbReference type="NCBI Taxonomy" id="315750"/>
    <lineage>
        <taxon>Bacteria</taxon>
        <taxon>Bacillati</taxon>
        <taxon>Bacillota</taxon>
        <taxon>Bacilli</taxon>
        <taxon>Bacillales</taxon>
        <taxon>Bacillaceae</taxon>
        <taxon>Bacillus</taxon>
    </lineage>
</organism>
<feature type="chain" id="PRO_1000060686" description="Large ribosomal subunit protein bL20">
    <location>
        <begin position="1"/>
        <end position="119"/>
    </location>
</feature>
<name>RL20_BACP2</name>